<dbReference type="EC" id="4.6.1.12" evidence="1"/>
<dbReference type="EMBL" id="CP000143">
    <property type="protein sequence ID" value="ABA78976.1"/>
    <property type="molecule type" value="Genomic_DNA"/>
</dbReference>
<dbReference type="RefSeq" id="WP_009562175.1">
    <property type="nucleotide sequence ID" value="NZ_CP030271.1"/>
</dbReference>
<dbReference type="RefSeq" id="YP_352877.1">
    <property type="nucleotide sequence ID" value="NC_007493.2"/>
</dbReference>
<dbReference type="SMR" id="Q3J2K8"/>
<dbReference type="STRING" id="272943.RSP_6071"/>
<dbReference type="EnsemblBacteria" id="ABA78976">
    <property type="protein sequence ID" value="ABA78976"/>
    <property type="gene ID" value="RSP_6071"/>
</dbReference>
<dbReference type="GeneID" id="67446554"/>
<dbReference type="KEGG" id="rsp:RSP_6071"/>
<dbReference type="PATRIC" id="fig|272943.9.peg.1745"/>
<dbReference type="eggNOG" id="COG0245">
    <property type="taxonomic scope" value="Bacteria"/>
</dbReference>
<dbReference type="OrthoDB" id="9804336at2"/>
<dbReference type="PhylomeDB" id="Q3J2K8"/>
<dbReference type="UniPathway" id="UPA00056">
    <property type="reaction ID" value="UER00095"/>
</dbReference>
<dbReference type="Proteomes" id="UP000002703">
    <property type="component" value="Chromosome 1"/>
</dbReference>
<dbReference type="GO" id="GO:0008685">
    <property type="term" value="F:2-C-methyl-D-erythritol 2,4-cyclodiphosphate synthase activity"/>
    <property type="evidence" value="ECO:0007669"/>
    <property type="project" value="UniProtKB-UniRule"/>
</dbReference>
<dbReference type="GO" id="GO:0046872">
    <property type="term" value="F:metal ion binding"/>
    <property type="evidence" value="ECO:0007669"/>
    <property type="project" value="UniProtKB-KW"/>
</dbReference>
<dbReference type="GO" id="GO:0019288">
    <property type="term" value="P:isopentenyl diphosphate biosynthetic process, methylerythritol 4-phosphate pathway"/>
    <property type="evidence" value="ECO:0007669"/>
    <property type="project" value="UniProtKB-UniRule"/>
</dbReference>
<dbReference type="GO" id="GO:0016114">
    <property type="term" value="P:terpenoid biosynthetic process"/>
    <property type="evidence" value="ECO:0007669"/>
    <property type="project" value="InterPro"/>
</dbReference>
<dbReference type="CDD" id="cd00554">
    <property type="entry name" value="MECDP_synthase"/>
    <property type="match status" value="1"/>
</dbReference>
<dbReference type="FunFam" id="3.30.1330.50:FF:000001">
    <property type="entry name" value="2-C-methyl-D-erythritol 2,4-cyclodiphosphate synthase"/>
    <property type="match status" value="1"/>
</dbReference>
<dbReference type="Gene3D" id="3.30.1330.50">
    <property type="entry name" value="2-C-methyl-D-erythritol 2,4-cyclodiphosphate synthase"/>
    <property type="match status" value="1"/>
</dbReference>
<dbReference type="HAMAP" id="MF_00107">
    <property type="entry name" value="IspF"/>
    <property type="match status" value="1"/>
</dbReference>
<dbReference type="InterPro" id="IPR003526">
    <property type="entry name" value="MECDP_synthase"/>
</dbReference>
<dbReference type="InterPro" id="IPR020555">
    <property type="entry name" value="MECDP_synthase_CS"/>
</dbReference>
<dbReference type="InterPro" id="IPR036571">
    <property type="entry name" value="MECDP_synthase_sf"/>
</dbReference>
<dbReference type="NCBIfam" id="TIGR00151">
    <property type="entry name" value="ispF"/>
    <property type="match status" value="1"/>
</dbReference>
<dbReference type="PANTHER" id="PTHR43181">
    <property type="entry name" value="2-C-METHYL-D-ERYTHRITOL 2,4-CYCLODIPHOSPHATE SYNTHASE, CHLOROPLASTIC"/>
    <property type="match status" value="1"/>
</dbReference>
<dbReference type="PANTHER" id="PTHR43181:SF1">
    <property type="entry name" value="2-C-METHYL-D-ERYTHRITOL 2,4-CYCLODIPHOSPHATE SYNTHASE, CHLOROPLASTIC"/>
    <property type="match status" value="1"/>
</dbReference>
<dbReference type="Pfam" id="PF02542">
    <property type="entry name" value="YgbB"/>
    <property type="match status" value="1"/>
</dbReference>
<dbReference type="SUPFAM" id="SSF69765">
    <property type="entry name" value="IpsF-like"/>
    <property type="match status" value="1"/>
</dbReference>
<dbReference type="PROSITE" id="PS01350">
    <property type="entry name" value="ISPF"/>
    <property type="match status" value="1"/>
</dbReference>
<feature type="chain" id="PRO_0000237748" description="2-C-methyl-D-erythritol 2,4-cyclodiphosphate synthase">
    <location>
        <begin position="1"/>
        <end position="159"/>
    </location>
</feature>
<feature type="binding site" evidence="1">
    <location>
        <begin position="10"/>
        <end position="12"/>
    </location>
    <ligand>
        <name>4-CDP-2-C-methyl-D-erythritol 2-phosphate</name>
        <dbReference type="ChEBI" id="CHEBI:57919"/>
    </ligand>
</feature>
<feature type="binding site" evidence="1">
    <location>
        <position position="10"/>
    </location>
    <ligand>
        <name>a divalent metal cation</name>
        <dbReference type="ChEBI" id="CHEBI:60240"/>
    </ligand>
</feature>
<feature type="binding site" evidence="1">
    <location>
        <position position="12"/>
    </location>
    <ligand>
        <name>a divalent metal cation</name>
        <dbReference type="ChEBI" id="CHEBI:60240"/>
    </ligand>
</feature>
<feature type="binding site" evidence="1">
    <location>
        <begin position="36"/>
        <end position="37"/>
    </location>
    <ligand>
        <name>4-CDP-2-C-methyl-D-erythritol 2-phosphate</name>
        <dbReference type="ChEBI" id="CHEBI:57919"/>
    </ligand>
</feature>
<feature type="binding site" evidence="1">
    <location>
        <position position="44"/>
    </location>
    <ligand>
        <name>a divalent metal cation</name>
        <dbReference type="ChEBI" id="CHEBI:60240"/>
    </ligand>
</feature>
<feature type="binding site" evidence="1">
    <location>
        <begin position="58"/>
        <end position="60"/>
    </location>
    <ligand>
        <name>4-CDP-2-C-methyl-D-erythritol 2-phosphate</name>
        <dbReference type="ChEBI" id="CHEBI:57919"/>
    </ligand>
</feature>
<feature type="binding site" evidence="1">
    <location>
        <begin position="134"/>
        <end position="137"/>
    </location>
    <ligand>
        <name>4-CDP-2-C-methyl-D-erythritol 2-phosphate</name>
        <dbReference type="ChEBI" id="CHEBI:57919"/>
    </ligand>
</feature>
<feature type="binding site" evidence="1">
    <location>
        <position position="141"/>
    </location>
    <ligand>
        <name>4-CDP-2-C-methyl-D-erythritol 2-phosphate</name>
        <dbReference type="ChEBI" id="CHEBI:57919"/>
    </ligand>
</feature>
<feature type="binding site" evidence="1">
    <location>
        <position position="144"/>
    </location>
    <ligand>
        <name>4-CDP-2-C-methyl-D-erythritol 2-phosphate</name>
        <dbReference type="ChEBI" id="CHEBI:57919"/>
    </ligand>
</feature>
<feature type="site" description="Transition state stabilizer" evidence="1">
    <location>
        <position position="36"/>
    </location>
</feature>
<feature type="site" description="Transition state stabilizer" evidence="1">
    <location>
        <position position="135"/>
    </location>
</feature>
<organism>
    <name type="scientific">Cereibacter sphaeroides (strain ATCC 17023 / DSM 158 / JCM 6121 / CCUG 31486 / LMG 2827 / NBRC 12203 / NCIMB 8253 / ATH 2.4.1.)</name>
    <name type="common">Rhodobacter sphaeroides</name>
    <dbReference type="NCBI Taxonomy" id="272943"/>
    <lineage>
        <taxon>Bacteria</taxon>
        <taxon>Pseudomonadati</taxon>
        <taxon>Pseudomonadota</taxon>
        <taxon>Alphaproteobacteria</taxon>
        <taxon>Rhodobacterales</taxon>
        <taxon>Paracoccaceae</taxon>
        <taxon>Cereibacter</taxon>
    </lineage>
</organism>
<sequence>MDIRTGNGFDVHAFGPGDHVWLCGVRVPHHRGLIGHSDADVGMHALTDAIYGALAEGDIGVHFPPSDPQWKGAASRIFLEHAMGRIAARGYTLANCDVTLICERPKIGPVAPAMREALAEIMGIAADRISVKATTSEKLGFTGREEGIAAIATVALLQA</sequence>
<accession>Q3J2K8</accession>
<name>ISPF_CERS4</name>
<proteinExistence type="inferred from homology"/>
<comment type="function">
    <text evidence="1">Involved in the biosynthesis of isopentenyl diphosphate (IPP) and dimethylallyl diphosphate (DMAPP), two major building blocks of isoprenoid compounds. Catalyzes the conversion of 4-diphosphocytidyl-2-C-methyl-D-erythritol 2-phosphate (CDP-ME2P) to 2-C-methyl-D-erythritol 2,4-cyclodiphosphate (ME-CPP) with a corresponding release of cytidine 5-monophosphate (CMP).</text>
</comment>
<comment type="catalytic activity">
    <reaction evidence="1">
        <text>4-CDP-2-C-methyl-D-erythritol 2-phosphate = 2-C-methyl-D-erythritol 2,4-cyclic diphosphate + CMP</text>
        <dbReference type="Rhea" id="RHEA:23864"/>
        <dbReference type="ChEBI" id="CHEBI:57919"/>
        <dbReference type="ChEBI" id="CHEBI:58483"/>
        <dbReference type="ChEBI" id="CHEBI:60377"/>
        <dbReference type="EC" id="4.6.1.12"/>
    </reaction>
</comment>
<comment type="cofactor">
    <cofactor evidence="1">
        <name>a divalent metal cation</name>
        <dbReference type="ChEBI" id="CHEBI:60240"/>
    </cofactor>
    <text evidence="1">Binds 1 divalent metal cation per subunit.</text>
</comment>
<comment type="pathway">
    <text evidence="1">Isoprenoid biosynthesis; isopentenyl diphosphate biosynthesis via DXP pathway; isopentenyl diphosphate from 1-deoxy-D-xylulose 5-phosphate: step 4/6.</text>
</comment>
<comment type="subunit">
    <text evidence="1">Homotrimer.</text>
</comment>
<comment type="similarity">
    <text evidence="1">Belongs to the IspF family.</text>
</comment>
<keyword id="KW-0414">Isoprene biosynthesis</keyword>
<keyword id="KW-0456">Lyase</keyword>
<keyword id="KW-0479">Metal-binding</keyword>
<keyword id="KW-1185">Reference proteome</keyword>
<protein>
    <recommendedName>
        <fullName evidence="1">2-C-methyl-D-erythritol 2,4-cyclodiphosphate synthase</fullName>
        <shortName evidence="1">MECDP-synthase</shortName>
        <shortName evidence="1">MECPP-synthase</shortName>
        <shortName evidence="1">MECPS</shortName>
        <ecNumber evidence="1">4.6.1.12</ecNumber>
    </recommendedName>
</protein>
<evidence type="ECO:0000255" key="1">
    <source>
        <dbReference type="HAMAP-Rule" id="MF_00107"/>
    </source>
</evidence>
<reference key="1">
    <citation type="submission" date="2005-09" db="EMBL/GenBank/DDBJ databases">
        <title>Complete sequence of chromosome 1 of Rhodobacter sphaeroides 2.4.1.</title>
        <authorList>
            <person name="Copeland A."/>
            <person name="Lucas S."/>
            <person name="Lapidus A."/>
            <person name="Barry K."/>
            <person name="Detter J.C."/>
            <person name="Glavina T."/>
            <person name="Hammon N."/>
            <person name="Israni S."/>
            <person name="Pitluck S."/>
            <person name="Richardson P."/>
            <person name="Mackenzie C."/>
            <person name="Choudhary M."/>
            <person name="Larimer F."/>
            <person name="Hauser L.J."/>
            <person name="Land M."/>
            <person name="Donohue T.J."/>
            <person name="Kaplan S."/>
        </authorList>
    </citation>
    <scope>NUCLEOTIDE SEQUENCE [LARGE SCALE GENOMIC DNA]</scope>
    <source>
        <strain>ATCC 17023 / DSM 158 / JCM 6121 / CCUG 31486 / LMG 2827 / NBRC 12203 / NCIMB 8253 / ATH 2.4.1.</strain>
    </source>
</reference>
<gene>
    <name evidence="1" type="primary">ispF</name>
    <name type="ordered locus">RHOS4_14080</name>
    <name type="ordered locus">RSP_6071</name>
</gene>